<evidence type="ECO:0000250" key="1">
    <source>
        <dbReference type="UniProtKB" id="P87377"/>
    </source>
</evidence>
<evidence type="ECO:0000255" key="2">
    <source>
        <dbReference type="PROSITE-ProRule" id="PRU00201"/>
    </source>
</evidence>
<evidence type="ECO:0000256" key="3">
    <source>
        <dbReference type="SAM" id="MobiDB-lite"/>
    </source>
</evidence>
<evidence type="ECO:0000269" key="4">
    <source>
    </source>
</evidence>
<evidence type="ECO:0000269" key="5">
    <source ref="1"/>
</evidence>
<evidence type="ECO:0000269" key="6">
    <source ref="2"/>
</evidence>
<evidence type="ECO:0000303" key="7">
    <source>
    </source>
</evidence>
<evidence type="ECO:0000303" key="8">
    <source ref="2"/>
</evidence>
<evidence type="ECO:0000305" key="9"/>
<evidence type="ECO:0000312" key="10">
    <source>
        <dbReference type="EMBL" id="AAI67867.1"/>
    </source>
</evidence>
<evidence type="ECO:0000312" key="11">
    <source>
        <dbReference type="EMBL" id="AAK00597.1"/>
    </source>
</evidence>
<evidence type="ECO:0000312" key="12">
    <source>
        <dbReference type="EMBL" id="BAH04511.1"/>
    </source>
</evidence>
<evidence type="ECO:0000312" key="13">
    <source>
        <dbReference type="EMBL" id="BAH04512.1"/>
    </source>
</evidence>
<evidence type="ECO:0000312" key="14">
    <source>
        <dbReference type="EMBL" id="CAJ82211.1"/>
    </source>
</evidence>
<sequence>MRNCCQEHRLSAGHLEPEISSSCASDVKSSPDMDSVSSQDSLYLPNSVGASLEDQDLWAQFHQEGTEMIITKSGRRMFPQCKIRLFGLHPYAKYMLLVDFVPLDNFRYKWNKNQWEAAGKAEPHPPCRTYVHPDSPAPGAHWMKDAICFQKLKLTNNTLDQQGHIILHSMHRYKPRFHVVQSDDMYNSPWGLVQVFSFPETEFTAVTAYQNEKITKLKINHNPFAKGFREQERSHKRDDVLKTLQQSPSKRQKRKKWEDSPEAEISDFPKATRVKEESIMDPAGVYQNWVSDHEANQGLTPHSPESDGANQEQQVPSSSSNFYNRNPYRRSSQHLSSPYDLGEPSSRRLTPDVATVPDSDPDSLAVLHVIPTQNSTQDRTCGVNFSMEAQMKQPLRGAMYSPYGAEQWMVPAQGQYRPMGYTAYPTDLSTQGAVAHPHSGMSDWSQYSLFPYSCW</sequence>
<name>VEGT_XENTR</name>
<organism>
    <name type="scientific">Xenopus tropicalis</name>
    <name type="common">Western clawed frog</name>
    <name type="synonym">Silurana tropicalis</name>
    <dbReference type="NCBI Taxonomy" id="8364"/>
    <lineage>
        <taxon>Eukaryota</taxon>
        <taxon>Metazoa</taxon>
        <taxon>Chordata</taxon>
        <taxon>Craniata</taxon>
        <taxon>Vertebrata</taxon>
        <taxon>Euteleostomi</taxon>
        <taxon>Amphibia</taxon>
        <taxon>Batrachia</taxon>
        <taxon>Anura</taxon>
        <taxon>Pipoidea</taxon>
        <taxon>Pipidae</taxon>
        <taxon>Xenopodinae</taxon>
        <taxon>Xenopus</taxon>
        <taxon>Silurana</taxon>
    </lineage>
</organism>
<feature type="chain" id="PRO_0000390494" description="T-box protein VegT">
    <location>
        <begin position="1"/>
        <end position="455"/>
    </location>
</feature>
<feature type="DNA-binding region" description="T-box" evidence="2">
    <location>
        <begin position="57"/>
        <end position="230"/>
    </location>
</feature>
<feature type="region of interest" description="Disordered" evidence="3">
    <location>
        <begin position="229"/>
        <end position="276"/>
    </location>
</feature>
<feature type="region of interest" description="Disordered" evidence="3">
    <location>
        <begin position="295"/>
        <end position="360"/>
    </location>
</feature>
<feature type="compositionally biased region" description="Basic and acidic residues" evidence="3">
    <location>
        <begin position="229"/>
        <end position="241"/>
    </location>
</feature>
<feature type="compositionally biased region" description="Polar residues" evidence="3">
    <location>
        <begin position="308"/>
        <end position="326"/>
    </location>
</feature>
<feature type="splice variant" id="VSP_053169" description="In isoform 2." evidence="8">
    <original>MRNCCQEHRLSAGHLEPEISSSCAS</original>
    <variation>MHSLP</variation>
    <location>
        <begin position="1"/>
        <end position="25"/>
    </location>
</feature>
<feature type="sequence conflict" description="In Ref. 1; AAK00597 and 3; AAI67867." evidence="9" ref="1 3">
    <original>I</original>
    <variation>T</variation>
    <location>
        <position position="19"/>
    </location>
</feature>
<feature type="sequence conflict" description="In Ref. 1; AAK00597." evidence="9" ref="1">
    <original>D</original>
    <variation>V</variation>
    <location>
        <position position="56"/>
    </location>
</feature>
<feature type="sequence conflict" description="In Ref. 1; AAK00597." evidence="9" ref="1">
    <original>F</original>
    <variation>L</variation>
    <location>
        <position position="78"/>
    </location>
</feature>
<feature type="sequence conflict" description="In Ref. 1; AAK00597." evidence="9" ref="1">
    <original>S</original>
    <variation>R</variation>
    <location>
        <position position="234"/>
    </location>
</feature>
<feature type="sequence conflict" description="In Ref. 1; AAK00597." evidence="9" ref="1">
    <original>D</original>
    <variation>E</variation>
    <location>
        <position position="307"/>
    </location>
</feature>
<comment type="function">
    <text evidence="1">Transcription factor required for both mesoderm and endoderm formation in the embryo; signaling determinants and concentration levels may determine which germ layer is formed. Acts together with beta-catenin to activate genes that are responsible for mesoderm induction including wnt-8, eomes t/bra, siamois, mix1 and sox17. Directly binds to promoter DNA. Patterns the mesoderm along the dorsoventral and posterior axis. Activates siamois gene transcription when alone or in combination with beta-catenin, but inhibits siamois transcription in combination with pou5f1.1/oct-25 (By similarity).</text>
</comment>
<comment type="subunit">
    <text evidence="1">Forms a repression complex on the promoters of the nodal/nr1 and siamois genes with the maternal factors tcf7l1/tcf3 and pouf5.1/oct-25. Interacts (via C-terminus) with tcf7l1/tcf3 (via N-terminus). Also interacts with the other POU-domain transcription factors pou5f1.2/oct-91 and pou5f1.3/oct-60 (By similarity).</text>
</comment>
<comment type="subcellular location">
    <subcellularLocation>
        <location evidence="1 2">Nucleus</location>
    </subcellularLocation>
</comment>
<comment type="alternative products">
    <event type="alternative splicing"/>
    <isoform>
        <id>Q28HY0-1</id>
        <name evidence="5">1</name>
        <name evidence="12">Maternal VegT</name>
        <name evidence="12">mVegT</name>
        <sequence type="displayed"/>
    </isoform>
    <isoform>
        <id>Q28HY0-2</id>
        <name evidence="6">2</name>
        <name evidence="13">Zygotic VegT</name>
        <name evidence="13">zVegT</name>
        <sequence type="described" ref="VSP_053169"/>
    </isoform>
</comment>
<comment type="tissue specificity">
    <text evidence="4">Vegetally localized in oocytes and expressed in the presumptive endoderm and mesoderm at early gastrula stage. Expression is down-regulated in the endoderm by the end of gastrulation but maintained in the lateral and ventral mesoderm of the blastopore lip.</text>
</comment>
<comment type="developmental stage">
    <text evidence="4">Expressed both maternally and zygotically.</text>
</comment>
<gene>
    <name evidence="10" type="primary">vegt</name>
    <name type="ORF">TEgg048b09.1</name>
</gene>
<keyword id="KW-0010">Activator</keyword>
<keyword id="KW-0025">Alternative splicing</keyword>
<keyword id="KW-0217">Developmental protein</keyword>
<keyword id="KW-0238">DNA-binding</keyword>
<keyword id="KW-0539">Nucleus</keyword>
<keyword id="KW-1185">Reference proteome</keyword>
<keyword id="KW-0804">Transcription</keyword>
<keyword id="KW-0805">Transcription regulation</keyword>
<dbReference type="EMBL" id="AF180352">
    <property type="protein sequence ID" value="AAK00597.1"/>
    <property type="molecule type" value="mRNA"/>
</dbReference>
<dbReference type="EMBL" id="AB451530">
    <property type="protein sequence ID" value="BAH04511.1"/>
    <property type="molecule type" value="Genomic_DNA"/>
</dbReference>
<dbReference type="EMBL" id="AB451530">
    <property type="protein sequence ID" value="BAH04512.1"/>
    <property type="molecule type" value="Genomic_DNA"/>
</dbReference>
<dbReference type="EMBL" id="CR760687">
    <property type="protein sequence ID" value="CAJ82211.1"/>
    <property type="molecule type" value="mRNA"/>
</dbReference>
<dbReference type="EMBL" id="BC167867">
    <property type="protein sequence ID" value="AAI67867.1"/>
    <property type="molecule type" value="mRNA"/>
</dbReference>
<dbReference type="RefSeq" id="NP_988858.1">
    <property type="nucleotide sequence ID" value="NM_203527.1"/>
</dbReference>
<dbReference type="RefSeq" id="XP_012813464.1">
    <molecule id="Q28HY0-2"/>
    <property type="nucleotide sequence ID" value="XM_012958010.2"/>
</dbReference>
<dbReference type="SMR" id="Q28HY0"/>
<dbReference type="STRING" id="8364.ENSXETP00000030188"/>
<dbReference type="PaxDb" id="8364-ENSXETP00000009288"/>
<dbReference type="GeneID" id="394452"/>
<dbReference type="KEGG" id="xtr:394452"/>
<dbReference type="CTD" id="394452"/>
<dbReference type="eggNOG" id="KOG3585">
    <property type="taxonomic scope" value="Eukaryota"/>
</dbReference>
<dbReference type="HOGENOM" id="CLU_049545_0_0_1"/>
<dbReference type="InParanoid" id="Q28HY0"/>
<dbReference type="OrthoDB" id="7442607at2759"/>
<dbReference type="TreeFam" id="TF106341"/>
<dbReference type="Proteomes" id="UP000008143">
    <property type="component" value="Chromosome 1"/>
</dbReference>
<dbReference type="Bgee" id="ENSXETG00000004260">
    <property type="expression patterns" value="Expressed in blastula and 27 other cell types or tissues"/>
</dbReference>
<dbReference type="ExpressionAtlas" id="Q28HY0">
    <property type="expression patterns" value="baseline"/>
</dbReference>
<dbReference type="GO" id="GO:0005634">
    <property type="term" value="C:nucleus"/>
    <property type="evidence" value="ECO:0007669"/>
    <property type="project" value="UniProtKB-SubCell"/>
</dbReference>
<dbReference type="GO" id="GO:0003700">
    <property type="term" value="F:DNA-binding transcription factor activity"/>
    <property type="evidence" value="ECO:0007669"/>
    <property type="project" value="InterPro"/>
</dbReference>
<dbReference type="GO" id="GO:0000978">
    <property type="term" value="F:RNA polymerase II cis-regulatory region sequence-specific DNA binding"/>
    <property type="evidence" value="ECO:0007669"/>
    <property type="project" value="InterPro"/>
</dbReference>
<dbReference type="GO" id="GO:0045893">
    <property type="term" value="P:positive regulation of DNA-templated transcription"/>
    <property type="evidence" value="ECO:0007669"/>
    <property type="project" value="InterPro"/>
</dbReference>
<dbReference type="CDD" id="cd20197">
    <property type="entry name" value="T-box_VegT-like"/>
    <property type="match status" value="1"/>
</dbReference>
<dbReference type="FunFam" id="2.60.40.820:FF:000007">
    <property type="entry name" value="T-box transcription factor"/>
    <property type="match status" value="1"/>
</dbReference>
<dbReference type="Gene3D" id="2.60.40.820">
    <property type="entry name" value="Transcription factor, T-box"/>
    <property type="match status" value="1"/>
</dbReference>
<dbReference type="InterPro" id="IPR008967">
    <property type="entry name" value="p53-like_TF_DNA-bd_sf"/>
</dbReference>
<dbReference type="InterPro" id="IPR046360">
    <property type="entry name" value="T-box_DNA-bd"/>
</dbReference>
<dbReference type="InterPro" id="IPR036960">
    <property type="entry name" value="T-box_sf"/>
</dbReference>
<dbReference type="InterPro" id="IPR001699">
    <property type="entry name" value="TF_T-box"/>
</dbReference>
<dbReference type="InterPro" id="IPR018186">
    <property type="entry name" value="TF_T-box_CS"/>
</dbReference>
<dbReference type="PANTHER" id="PTHR11267:SF200">
    <property type="entry name" value="MGA, MAX DIMERIZATION PROTEIN"/>
    <property type="match status" value="1"/>
</dbReference>
<dbReference type="PANTHER" id="PTHR11267">
    <property type="entry name" value="T-BOX PROTEIN-RELATED"/>
    <property type="match status" value="1"/>
</dbReference>
<dbReference type="Pfam" id="PF00907">
    <property type="entry name" value="T-box"/>
    <property type="match status" value="1"/>
</dbReference>
<dbReference type="PRINTS" id="PR00937">
    <property type="entry name" value="TBOX"/>
</dbReference>
<dbReference type="SMART" id="SM00425">
    <property type="entry name" value="TBOX"/>
    <property type="match status" value="1"/>
</dbReference>
<dbReference type="SUPFAM" id="SSF49417">
    <property type="entry name" value="p53-like transcription factors"/>
    <property type="match status" value="1"/>
</dbReference>
<dbReference type="PROSITE" id="PS01283">
    <property type="entry name" value="TBOX_1"/>
    <property type="match status" value="1"/>
</dbReference>
<dbReference type="PROSITE" id="PS01264">
    <property type="entry name" value="TBOX_2"/>
    <property type="match status" value="1"/>
</dbReference>
<dbReference type="PROSITE" id="PS50252">
    <property type="entry name" value="TBOX_3"/>
    <property type="match status" value="1"/>
</dbReference>
<protein>
    <recommendedName>
        <fullName evidence="1">T-box protein VegT</fullName>
        <shortName evidence="7">tVegT</shortName>
    </recommendedName>
</protein>
<accession>Q28HY0</accession>
<accession>B4F6G6</accession>
<accession>B7XDC3</accession>
<accession>Q98UD1</accession>
<reference evidence="9 11" key="1">
    <citation type="submission" date="1999-08" db="EMBL/GenBank/DDBJ databases">
        <title>Characterization of the RNA signal that directs vegetal localization of VegT, the primary germ layer determinant in Xenopus.</title>
        <authorList>
            <person name="Bubunenko M."/>
            <person name="Vempati U.D."/>
            <person name="King M.L."/>
        </authorList>
    </citation>
    <scope>NUCLEOTIDE SEQUENCE [MRNA] (ISOFORM 1)</scope>
</reference>
<reference evidence="9 11" key="2">
    <citation type="submission" date="2008-08" db="EMBL/GenBank/DDBJ databases">
        <title>Eomesodermin and Nodal signaling coregulate Xenopus mesoderm formation via the direct mediation of zygotic VegT expression.</title>
        <authorList>
            <person name="Fukuda M."/>
            <person name="Takahashi S."/>
            <person name="Haramoto Y."/>
            <person name="Onuma Y."/>
            <person name="Yeo C."/>
            <person name="Ishiura S."/>
            <person name="Asashima M."/>
        </authorList>
    </citation>
    <scope>NUCLEOTIDE SEQUENCE [GENOMIC DNA]</scope>
    <source>
        <strain evidence="12">N6</strain>
    </source>
</reference>
<reference evidence="9 11" key="3">
    <citation type="submission" date="2006-10" db="EMBL/GenBank/DDBJ databases">
        <authorList>
            <consortium name="Sanger Xenopus tropicalis EST/cDNA project"/>
        </authorList>
    </citation>
    <scope>NUCLEOTIDE SEQUENCE [LARGE SCALE MRNA] (ISOFORM 1)</scope>
    <source>
        <tissue evidence="14">Egg</tissue>
    </source>
</reference>
<reference evidence="9 11" key="4">
    <citation type="submission" date="2008-07" db="EMBL/GenBank/DDBJ databases">
        <authorList>
            <consortium name="NIH - Xenopus Gene Collection (XGC) project"/>
        </authorList>
    </citation>
    <scope>NUCLEOTIDE SEQUENCE [LARGE SCALE MRNA] (ISOFORM 1)</scope>
    <source>
        <tissue evidence="10">Gastrula</tissue>
    </source>
</reference>
<reference evidence="9" key="5">
    <citation type="journal article" date="2003" name="Dev. Dyn.">
        <title>Molecular components of the endoderm specification pathway in Xenopus tropicalis.</title>
        <authorList>
            <person name="D'Souza A."/>
            <person name="Lee M."/>
            <person name="Taverner N."/>
            <person name="Mason J."/>
            <person name="Carruthers S."/>
            <person name="Smith J.C."/>
            <person name="Amaya E."/>
            <person name="Papalopulu N."/>
            <person name="Zorn A.M."/>
        </authorList>
    </citation>
    <scope>TISSUE SPECIFICITY</scope>
    <scope>DEVELOPMENTAL STAGE</scope>
</reference>
<proteinExistence type="evidence at transcript level"/>